<comment type="function">
    <text evidence="1">Involved in DNA replication and cell separation.</text>
</comment>
<comment type="subcellular location">
    <subcellularLocation>
        <location evidence="1">Cytoplasm</location>
    </subcellularLocation>
    <subcellularLocation>
        <location evidence="1">Nucleus</location>
    </subcellularLocation>
</comment>
<comment type="similarity">
    <text evidence="4">Belongs to the SDS23 family.</text>
</comment>
<accession>A4QRM8</accession>
<accession>G4N7Q7</accession>
<gene>
    <name type="primary">SDS23</name>
    <name type="ORF">MGG_03536</name>
</gene>
<sequence>MDKADTSAAPVGASSPIPIPIDQPQRSNSQQGSIGNGSGSHRTPGHIPTHRQSFAENLRNPPPSPRAQRHLSLSQSAIQELLLKNPSSKQPNPLFANRDWRDVAVGELVTQDDVKWADLDTSVEEATMLLLRSSPANVVHVREKSTDNTPVSTFDYNDLNAYILVVVGLAHPEDDEQVALYDEIARKARERVAIPLRDIQPICRKEVLVTFSADEPLSRGVEVLGSGIHRVFVTTGNGDVIGVLSQLKVLGFFWEEGVSFPEIDRLYPVPLRDLKLGTHQIIAINADRPLAEALTLMSNEGLTSVAVVDNGMNVVGNISTADVRLLTSAASMPLLESTCMHFISVILTERGVERGQDSFPVFYVNPYSTLAHTVAKLTATQSHRMWVVESPSPSPSVPGTPLLQPVSSASSGQVAGATPTTPATTSTASGTPALSTATSTGSTIVIPSAVPTASLPPPVSSSVPAAALPGAHLSGRLTGVISLTDILNMFARSSGLHPSDPGEQRARRRRSSSASMRPSMEASRPSAEFIRRLG</sequence>
<reference key="1">
    <citation type="journal article" date="2005" name="Nature">
        <title>The genome sequence of the rice blast fungus Magnaporthe grisea.</title>
        <authorList>
            <person name="Dean R.A."/>
            <person name="Talbot N.J."/>
            <person name="Ebbole D.J."/>
            <person name="Farman M.L."/>
            <person name="Mitchell T.K."/>
            <person name="Orbach M.J."/>
            <person name="Thon M.R."/>
            <person name="Kulkarni R."/>
            <person name="Xu J.-R."/>
            <person name="Pan H."/>
            <person name="Read N.D."/>
            <person name="Lee Y.-H."/>
            <person name="Carbone I."/>
            <person name="Brown D."/>
            <person name="Oh Y.Y."/>
            <person name="Donofrio N."/>
            <person name="Jeong J.S."/>
            <person name="Soanes D.M."/>
            <person name="Djonovic S."/>
            <person name="Kolomiets E."/>
            <person name="Rehmeyer C."/>
            <person name="Li W."/>
            <person name="Harding M."/>
            <person name="Kim S."/>
            <person name="Lebrun M.-H."/>
            <person name="Bohnert H."/>
            <person name="Coughlan S."/>
            <person name="Butler J."/>
            <person name="Calvo S.E."/>
            <person name="Ma L.-J."/>
            <person name="Nicol R."/>
            <person name="Purcell S."/>
            <person name="Nusbaum C."/>
            <person name="Galagan J.E."/>
            <person name="Birren B.W."/>
        </authorList>
    </citation>
    <scope>NUCLEOTIDE SEQUENCE [LARGE SCALE GENOMIC DNA]</scope>
    <source>
        <strain>70-15 / ATCC MYA-4617 / FGSC 8958</strain>
    </source>
</reference>
<proteinExistence type="inferred from homology"/>
<dbReference type="EMBL" id="CM001234">
    <property type="protein sequence ID" value="EHA50062.1"/>
    <property type="molecule type" value="Genomic_DNA"/>
</dbReference>
<dbReference type="RefSeq" id="XP_003716381.1">
    <property type="nucleotide sequence ID" value="XM_003716333.1"/>
</dbReference>
<dbReference type="SMR" id="A4QRM8"/>
<dbReference type="FunCoup" id="A4QRM8">
    <property type="interactions" value="208"/>
</dbReference>
<dbReference type="STRING" id="242507.A4QRM8"/>
<dbReference type="EnsemblFungi" id="MGG_03536T0">
    <property type="protein sequence ID" value="MGG_03536T0"/>
    <property type="gene ID" value="MGG_03536"/>
</dbReference>
<dbReference type="GeneID" id="2676613"/>
<dbReference type="KEGG" id="mgr:MGG_03536"/>
<dbReference type="VEuPathDB" id="FungiDB:MGG_03536"/>
<dbReference type="eggNOG" id="KOG1764">
    <property type="taxonomic scope" value="Eukaryota"/>
</dbReference>
<dbReference type="HOGENOM" id="CLU_024459_0_0_1"/>
<dbReference type="InParanoid" id="A4QRM8"/>
<dbReference type="OMA" id="DWTQISI"/>
<dbReference type="OrthoDB" id="449052at2759"/>
<dbReference type="Proteomes" id="UP000009058">
    <property type="component" value="Chromosome 4"/>
</dbReference>
<dbReference type="GO" id="GO:0005737">
    <property type="term" value="C:cytoplasm"/>
    <property type="evidence" value="ECO:0000250"/>
    <property type="project" value="PAMGO_MGG"/>
</dbReference>
<dbReference type="GO" id="GO:0005634">
    <property type="term" value="C:nucleus"/>
    <property type="evidence" value="ECO:0000250"/>
    <property type="project" value="PAMGO_MGG"/>
</dbReference>
<dbReference type="GO" id="GO:0004865">
    <property type="term" value="F:protein serine/threonine phosphatase inhibitor activity"/>
    <property type="evidence" value="ECO:0007669"/>
    <property type="project" value="TreeGrafter"/>
</dbReference>
<dbReference type="GO" id="GO:0042149">
    <property type="term" value="P:cellular response to glucose starvation"/>
    <property type="evidence" value="ECO:0007669"/>
    <property type="project" value="InterPro"/>
</dbReference>
<dbReference type="GO" id="GO:0030071">
    <property type="term" value="P:regulation of mitotic metaphase/anaphase transition"/>
    <property type="evidence" value="ECO:0007669"/>
    <property type="project" value="InterPro"/>
</dbReference>
<dbReference type="CDD" id="cd02205">
    <property type="entry name" value="CBS_pair_SF"/>
    <property type="match status" value="1"/>
</dbReference>
<dbReference type="FunFam" id="3.10.580.10:FF:000035">
    <property type="entry name" value="Protein SDS23"/>
    <property type="match status" value="1"/>
</dbReference>
<dbReference type="Gene3D" id="3.10.580.10">
    <property type="entry name" value="CBS-domain"/>
    <property type="match status" value="2"/>
</dbReference>
<dbReference type="InterPro" id="IPR050511">
    <property type="entry name" value="AMPK_gamma/SDS23_families"/>
</dbReference>
<dbReference type="InterPro" id="IPR000644">
    <property type="entry name" value="CBS_dom"/>
</dbReference>
<dbReference type="InterPro" id="IPR046342">
    <property type="entry name" value="CBS_dom_sf"/>
</dbReference>
<dbReference type="InterPro" id="IPR016711">
    <property type="entry name" value="Ssd23"/>
</dbReference>
<dbReference type="PANTHER" id="PTHR13780">
    <property type="entry name" value="AMP-ACTIVATED PROTEIN KINASE, GAMMA REGULATORY SUBUNIT"/>
    <property type="match status" value="1"/>
</dbReference>
<dbReference type="PANTHER" id="PTHR13780:SF36">
    <property type="entry name" value="CBS DOMAIN-CONTAINING PROTEIN"/>
    <property type="match status" value="1"/>
</dbReference>
<dbReference type="Pfam" id="PF00571">
    <property type="entry name" value="CBS"/>
    <property type="match status" value="2"/>
</dbReference>
<dbReference type="PIRSF" id="PIRSF018148">
    <property type="entry name" value="UCP018148_CBS_YBR214w"/>
    <property type="match status" value="1"/>
</dbReference>
<dbReference type="SMART" id="SM00116">
    <property type="entry name" value="CBS"/>
    <property type="match status" value="3"/>
</dbReference>
<dbReference type="SUPFAM" id="SSF54631">
    <property type="entry name" value="CBS-domain pair"/>
    <property type="match status" value="2"/>
</dbReference>
<dbReference type="PROSITE" id="PS51371">
    <property type="entry name" value="CBS"/>
    <property type="match status" value="3"/>
</dbReference>
<name>SDS23_PYRO7</name>
<feature type="chain" id="PRO_0000324954" description="Protein SDS23">
    <location>
        <begin position="1"/>
        <end position="534"/>
    </location>
</feature>
<feature type="domain" description="CBS 1" evidence="2">
    <location>
        <begin position="109"/>
        <end position="173"/>
    </location>
</feature>
<feature type="domain" description="CBS 2" evidence="2">
    <location>
        <begin position="203"/>
        <end position="262"/>
    </location>
</feature>
<feature type="domain" description="CBS 3" evidence="2">
    <location>
        <begin position="277"/>
        <end position="334"/>
    </location>
</feature>
<feature type="region of interest" description="Disordered" evidence="3">
    <location>
        <begin position="1"/>
        <end position="71"/>
    </location>
</feature>
<feature type="region of interest" description="Disordered" evidence="3">
    <location>
        <begin position="389"/>
        <end position="438"/>
    </location>
</feature>
<feature type="region of interest" description="Disordered" evidence="3">
    <location>
        <begin position="494"/>
        <end position="534"/>
    </location>
</feature>
<feature type="compositionally biased region" description="Low complexity" evidence="3">
    <location>
        <begin position="406"/>
        <end position="438"/>
    </location>
</feature>
<feature type="compositionally biased region" description="Low complexity" evidence="3">
    <location>
        <begin position="512"/>
        <end position="524"/>
    </location>
</feature>
<evidence type="ECO:0000250" key="1"/>
<evidence type="ECO:0000255" key="2">
    <source>
        <dbReference type="PROSITE-ProRule" id="PRU00703"/>
    </source>
</evidence>
<evidence type="ECO:0000256" key="3">
    <source>
        <dbReference type="SAM" id="MobiDB-lite"/>
    </source>
</evidence>
<evidence type="ECO:0000305" key="4"/>
<protein>
    <recommendedName>
        <fullName>Protein SDS23</fullName>
    </recommendedName>
</protein>
<keyword id="KW-0129">CBS domain</keyword>
<keyword id="KW-0963">Cytoplasm</keyword>
<keyword id="KW-0539">Nucleus</keyword>
<keyword id="KW-1185">Reference proteome</keyword>
<keyword id="KW-0677">Repeat</keyword>
<organism>
    <name type="scientific">Pyricularia oryzae (strain 70-15 / ATCC MYA-4617 / FGSC 8958)</name>
    <name type="common">Rice blast fungus</name>
    <name type="synonym">Magnaporthe oryzae</name>
    <dbReference type="NCBI Taxonomy" id="242507"/>
    <lineage>
        <taxon>Eukaryota</taxon>
        <taxon>Fungi</taxon>
        <taxon>Dikarya</taxon>
        <taxon>Ascomycota</taxon>
        <taxon>Pezizomycotina</taxon>
        <taxon>Sordariomycetes</taxon>
        <taxon>Sordariomycetidae</taxon>
        <taxon>Magnaporthales</taxon>
        <taxon>Pyriculariaceae</taxon>
        <taxon>Pyricularia</taxon>
    </lineage>
</organism>